<sequence>MSFLSNIFARRQQSSSVAKDRLQILLAHERGAGEAGESDLIRQLHKEIMEVIARHVAVDQDKVQIKVDRGSGCSMLEIDVEVPQELSGKRGS</sequence>
<proteinExistence type="inferred from homology"/>
<comment type="function">
    <text evidence="1">Prevents the cell division inhibition by proteins MinC and MinD at internal division sites while permitting inhibition at polar sites. This ensures cell division at the proper site by restricting the formation of a division septum at the midpoint of the long axis of the cell.</text>
</comment>
<comment type="similarity">
    <text evidence="1">Belongs to the MinE family.</text>
</comment>
<name>MINE_GLUOX</name>
<organism>
    <name type="scientific">Gluconobacter oxydans (strain 621H)</name>
    <name type="common">Gluconobacter suboxydans</name>
    <dbReference type="NCBI Taxonomy" id="290633"/>
    <lineage>
        <taxon>Bacteria</taxon>
        <taxon>Pseudomonadati</taxon>
        <taxon>Pseudomonadota</taxon>
        <taxon>Alphaproteobacteria</taxon>
        <taxon>Acetobacterales</taxon>
        <taxon>Acetobacteraceae</taxon>
        <taxon>Gluconobacter</taxon>
    </lineage>
</organism>
<reference key="1">
    <citation type="journal article" date="2005" name="Nat. Biotechnol.">
        <title>Complete genome sequence of the acetic acid bacterium Gluconobacter oxydans.</title>
        <authorList>
            <person name="Prust C."/>
            <person name="Hoffmeister M."/>
            <person name="Liesegang H."/>
            <person name="Wiezer A."/>
            <person name="Fricke W.F."/>
            <person name="Ehrenreich A."/>
            <person name="Gottschalk G."/>
            <person name="Deppenmeier U."/>
        </authorList>
    </citation>
    <scope>NUCLEOTIDE SEQUENCE [LARGE SCALE GENOMIC DNA]</scope>
    <source>
        <strain>621H</strain>
    </source>
</reference>
<evidence type="ECO:0000255" key="1">
    <source>
        <dbReference type="HAMAP-Rule" id="MF_00262"/>
    </source>
</evidence>
<gene>
    <name evidence="1" type="primary">minE</name>
    <name type="ordered locus">GOX0402</name>
</gene>
<keyword id="KW-0131">Cell cycle</keyword>
<keyword id="KW-0132">Cell division</keyword>
<keyword id="KW-1185">Reference proteome</keyword>
<feature type="chain" id="PRO_0000298122" description="Cell division topological specificity factor">
    <location>
        <begin position="1"/>
        <end position="92"/>
    </location>
</feature>
<accession>Q5FTW1</accession>
<protein>
    <recommendedName>
        <fullName evidence="1">Cell division topological specificity factor</fullName>
    </recommendedName>
</protein>
<dbReference type="EMBL" id="CP000009">
    <property type="protein sequence ID" value="AAW60185.1"/>
    <property type="molecule type" value="Genomic_DNA"/>
</dbReference>
<dbReference type="RefSeq" id="WP_011251986.1">
    <property type="nucleotide sequence ID" value="NZ_LT900338.1"/>
</dbReference>
<dbReference type="SMR" id="Q5FTW1"/>
<dbReference type="STRING" id="290633.GOX0402"/>
<dbReference type="GeneID" id="56904668"/>
<dbReference type="KEGG" id="gox:GOX0402"/>
<dbReference type="eggNOG" id="COG0851">
    <property type="taxonomic scope" value="Bacteria"/>
</dbReference>
<dbReference type="HOGENOM" id="CLU_137929_2_0_5"/>
<dbReference type="Proteomes" id="UP000006375">
    <property type="component" value="Chromosome"/>
</dbReference>
<dbReference type="GO" id="GO:0051301">
    <property type="term" value="P:cell division"/>
    <property type="evidence" value="ECO:0007669"/>
    <property type="project" value="UniProtKB-KW"/>
</dbReference>
<dbReference type="GO" id="GO:0032955">
    <property type="term" value="P:regulation of division septum assembly"/>
    <property type="evidence" value="ECO:0007669"/>
    <property type="project" value="InterPro"/>
</dbReference>
<dbReference type="Gene3D" id="3.30.1070.10">
    <property type="entry name" value="Cell division topological specificity factor MinE"/>
    <property type="match status" value="1"/>
</dbReference>
<dbReference type="HAMAP" id="MF_00262">
    <property type="entry name" value="MinE"/>
    <property type="match status" value="1"/>
</dbReference>
<dbReference type="InterPro" id="IPR005527">
    <property type="entry name" value="MinE"/>
</dbReference>
<dbReference type="InterPro" id="IPR036707">
    <property type="entry name" value="MinE_sf"/>
</dbReference>
<dbReference type="NCBIfam" id="TIGR01215">
    <property type="entry name" value="minE"/>
    <property type="match status" value="1"/>
</dbReference>
<dbReference type="NCBIfam" id="NF001422">
    <property type="entry name" value="PRK00296.1"/>
    <property type="match status" value="1"/>
</dbReference>
<dbReference type="Pfam" id="PF03776">
    <property type="entry name" value="MinE"/>
    <property type="match status" value="1"/>
</dbReference>
<dbReference type="SUPFAM" id="SSF55229">
    <property type="entry name" value="Cell division protein MinE topological specificity domain"/>
    <property type="match status" value="1"/>
</dbReference>